<reference key="1">
    <citation type="journal article" date="1992" name="Science">
        <title>Carnivorous plants: phylogeny and structural evolution.</title>
        <authorList>
            <person name="Albert V.A."/>
            <person name="Williams S.E."/>
            <person name="Chase M.W."/>
        </authorList>
    </citation>
    <scope>NUCLEOTIDE SEQUENCE [GENOMIC DNA]</scope>
</reference>
<proteinExistence type="inferred from homology"/>
<keyword id="KW-0113">Calvin cycle</keyword>
<keyword id="KW-0120">Carbon dioxide fixation</keyword>
<keyword id="KW-0150">Chloroplast</keyword>
<keyword id="KW-1015">Disulfide bond</keyword>
<keyword id="KW-0456">Lyase</keyword>
<keyword id="KW-0460">Magnesium</keyword>
<keyword id="KW-0479">Metal-binding</keyword>
<keyword id="KW-0488">Methylation</keyword>
<keyword id="KW-0503">Monooxygenase</keyword>
<keyword id="KW-0560">Oxidoreductase</keyword>
<keyword id="KW-0601">Photorespiration</keyword>
<keyword id="KW-0602">Photosynthesis</keyword>
<keyword id="KW-0934">Plastid</keyword>
<organism>
    <name type="scientific">Oxalis dillenii</name>
    <name type="common">Gray-green wood sorrel</name>
    <dbReference type="NCBI Taxonomy" id="4035"/>
    <lineage>
        <taxon>Eukaryota</taxon>
        <taxon>Viridiplantae</taxon>
        <taxon>Streptophyta</taxon>
        <taxon>Embryophyta</taxon>
        <taxon>Tracheophyta</taxon>
        <taxon>Spermatophyta</taxon>
        <taxon>Magnoliopsida</taxon>
        <taxon>eudicotyledons</taxon>
        <taxon>Gunneridae</taxon>
        <taxon>Pentapetalae</taxon>
        <taxon>rosids</taxon>
        <taxon>fabids</taxon>
        <taxon>Oxalidales</taxon>
        <taxon>Oxalidaceae</taxon>
        <taxon>Oxalis</taxon>
    </lineage>
</organism>
<comment type="function">
    <text evidence="1">RuBisCO catalyzes two reactions: the carboxylation of D-ribulose 1,5-bisphosphate, the primary event in carbon dioxide fixation, as well as the oxidative fragmentation of the pentose substrate in the photorespiration process. Both reactions occur simultaneously and in competition at the same active site.</text>
</comment>
<comment type="catalytic activity">
    <reaction evidence="1">
        <text>2 (2R)-3-phosphoglycerate + 2 H(+) = D-ribulose 1,5-bisphosphate + CO2 + H2O</text>
        <dbReference type="Rhea" id="RHEA:23124"/>
        <dbReference type="ChEBI" id="CHEBI:15377"/>
        <dbReference type="ChEBI" id="CHEBI:15378"/>
        <dbReference type="ChEBI" id="CHEBI:16526"/>
        <dbReference type="ChEBI" id="CHEBI:57870"/>
        <dbReference type="ChEBI" id="CHEBI:58272"/>
        <dbReference type="EC" id="4.1.1.39"/>
    </reaction>
</comment>
<comment type="catalytic activity">
    <reaction evidence="1">
        <text>D-ribulose 1,5-bisphosphate + O2 = 2-phosphoglycolate + (2R)-3-phosphoglycerate + 2 H(+)</text>
        <dbReference type="Rhea" id="RHEA:36631"/>
        <dbReference type="ChEBI" id="CHEBI:15378"/>
        <dbReference type="ChEBI" id="CHEBI:15379"/>
        <dbReference type="ChEBI" id="CHEBI:57870"/>
        <dbReference type="ChEBI" id="CHEBI:58033"/>
        <dbReference type="ChEBI" id="CHEBI:58272"/>
    </reaction>
</comment>
<comment type="cofactor">
    <cofactor evidence="1">
        <name>Mg(2+)</name>
        <dbReference type="ChEBI" id="CHEBI:18420"/>
    </cofactor>
    <text evidence="1">Binds 1 Mg(2+) ion per subunit.</text>
</comment>
<comment type="subunit">
    <text evidence="1">Heterohexadecamer of 8 large chains and 8 small chains; disulfide-linked. The disulfide link is formed within the large subunit homodimers.</text>
</comment>
<comment type="subcellular location">
    <subcellularLocation>
        <location>Plastid</location>
        <location>Chloroplast</location>
    </subcellularLocation>
</comment>
<comment type="PTM">
    <text evidence="1">The disulfide bond which can form in the large chain dimeric partners within the hexadecamer appears to be associated with oxidative stress and protein turnover.</text>
</comment>
<comment type="miscellaneous">
    <text evidence="1">The basic functional RuBisCO is composed of a large chain homodimer in a 'head-to-tail' conformation. In form I RuBisCO this homodimer is arranged in a barrel-like tetramer with the small subunits forming a tetrameric 'cap' on each end of the 'barrel'.</text>
</comment>
<comment type="similarity">
    <text evidence="1">Belongs to the RuBisCO large chain family. Type I subfamily.</text>
</comment>
<accession>P28436</accession>
<gene>
    <name evidence="1" type="primary">rbcL</name>
</gene>
<geneLocation type="chloroplast"/>
<protein>
    <recommendedName>
        <fullName evidence="1">Ribulose bisphosphate carboxylase large chain</fullName>
        <shortName evidence="1">RuBisCO large subunit</shortName>
        <ecNumber evidence="1">4.1.1.39</ecNumber>
    </recommendedName>
</protein>
<evidence type="ECO:0000255" key="1">
    <source>
        <dbReference type="HAMAP-Rule" id="MF_01338"/>
    </source>
</evidence>
<feature type="chain" id="PRO_0000062553" description="Ribulose bisphosphate carboxylase large chain">
    <location>
        <begin position="1" status="less than"/>
        <end position="466"/>
    </location>
</feature>
<feature type="active site" description="Proton acceptor" evidence="1">
    <location>
        <position position="166"/>
    </location>
</feature>
<feature type="active site" description="Proton acceptor" evidence="1">
    <location>
        <position position="285"/>
    </location>
</feature>
<feature type="binding site" description="in homodimeric partner" evidence="1">
    <location>
        <position position="114"/>
    </location>
    <ligand>
        <name>substrate</name>
    </ligand>
</feature>
<feature type="binding site" evidence="1">
    <location>
        <position position="164"/>
    </location>
    <ligand>
        <name>substrate</name>
    </ligand>
</feature>
<feature type="binding site" evidence="1">
    <location>
        <position position="168"/>
    </location>
    <ligand>
        <name>substrate</name>
    </ligand>
</feature>
<feature type="binding site" description="via carbamate group" evidence="1">
    <location>
        <position position="192"/>
    </location>
    <ligand>
        <name>Mg(2+)</name>
        <dbReference type="ChEBI" id="CHEBI:18420"/>
    </ligand>
</feature>
<feature type="binding site" evidence="1">
    <location>
        <position position="194"/>
    </location>
    <ligand>
        <name>Mg(2+)</name>
        <dbReference type="ChEBI" id="CHEBI:18420"/>
    </ligand>
</feature>
<feature type="binding site" evidence="1">
    <location>
        <position position="195"/>
    </location>
    <ligand>
        <name>Mg(2+)</name>
        <dbReference type="ChEBI" id="CHEBI:18420"/>
    </ligand>
</feature>
<feature type="binding site" evidence="1">
    <location>
        <position position="286"/>
    </location>
    <ligand>
        <name>substrate</name>
    </ligand>
</feature>
<feature type="binding site" evidence="1">
    <location>
        <position position="318"/>
    </location>
    <ligand>
        <name>substrate</name>
    </ligand>
</feature>
<feature type="binding site" evidence="1">
    <location>
        <position position="370"/>
    </location>
    <ligand>
        <name>substrate</name>
    </ligand>
</feature>
<feature type="site" description="Transition state stabilizer" evidence="1">
    <location>
        <position position="325"/>
    </location>
</feature>
<feature type="modified residue" description="N6,N6,N6-trimethyllysine" evidence="1">
    <location>
        <position position="5"/>
    </location>
</feature>
<feature type="modified residue" description="N6-carboxylysine" evidence="1">
    <location>
        <position position="192"/>
    </location>
</feature>
<feature type="disulfide bond" description="Interchain; in linked form" evidence="1">
    <location>
        <position position="238"/>
    </location>
</feature>
<feature type="non-terminal residue">
    <location>
        <position position="1"/>
    </location>
</feature>
<dbReference type="EC" id="4.1.1.39" evidence="1"/>
<dbReference type="EMBL" id="L01938">
    <property type="protein sequence ID" value="AAA84534.2"/>
    <property type="molecule type" value="Genomic_DNA"/>
</dbReference>
<dbReference type="GO" id="GO:0009507">
    <property type="term" value="C:chloroplast"/>
    <property type="evidence" value="ECO:0007669"/>
    <property type="project" value="UniProtKB-SubCell"/>
</dbReference>
<dbReference type="GO" id="GO:0000287">
    <property type="term" value="F:magnesium ion binding"/>
    <property type="evidence" value="ECO:0007669"/>
    <property type="project" value="InterPro"/>
</dbReference>
<dbReference type="GO" id="GO:0004497">
    <property type="term" value="F:monooxygenase activity"/>
    <property type="evidence" value="ECO:0007669"/>
    <property type="project" value="UniProtKB-KW"/>
</dbReference>
<dbReference type="GO" id="GO:0016984">
    <property type="term" value="F:ribulose-bisphosphate carboxylase activity"/>
    <property type="evidence" value="ECO:0007669"/>
    <property type="project" value="UniProtKB-EC"/>
</dbReference>
<dbReference type="GO" id="GO:0009853">
    <property type="term" value="P:photorespiration"/>
    <property type="evidence" value="ECO:0007669"/>
    <property type="project" value="UniProtKB-KW"/>
</dbReference>
<dbReference type="GO" id="GO:0019253">
    <property type="term" value="P:reductive pentose-phosphate cycle"/>
    <property type="evidence" value="ECO:0007669"/>
    <property type="project" value="UniProtKB-KW"/>
</dbReference>
<dbReference type="CDD" id="cd08212">
    <property type="entry name" value="RuBisCO_large_I"/>
    <property type="match status" value="1"/>
</dbReference>
<dbReference type="FunFam" id="3.20.20.110:FF:000001">
    <property type="entry name" value="Ribulose bisphosphate carboxylase large chain"/>
    <property type="match status" value="1"/>
</dbReference>
<dbReference type="FunFam" id="3.30.70.150:FF:000001">
    <property type="entry name" value="Ribulose bisphosphate carboxylase large chain"/>
    <property type="match status" value="1"/>
</dbReference>
<dbReference type="Gene3D" id="3.20.20.110">
    <property type="entry name" value="Ribulose bisphosphate carboxylase, large subunit, C-terminal domain"/>
    <property type="match status" value="1"/>
</dbReference>
<dbReference type="Gene3D" id="3.30.70.150">
    <property type="entry name" value="RuBisCO large subunit, N-terminal domain"/>
    <property type="match status" value="1"/>
</dbReference>
<dbReference type="HAMAP" id="MF_01338">
    <property type="entry name" value="RuBisCO_L_type1"/>
    <property type="match status" value="1"/>
</dbReference>
<dbReference type="InterPro" id="IPR033966">
    <property type="entry name" value="RuBisCO"/>
</dbReference>
<dbReference type="InterPro" id="IPR020878">
    <property type="entry name" value="RuBisCo_large_chain_AS"/>
</dbReference>
<dbReference type="InterPro" id="IPR000685">
    <property type="entry name" value="RuBisCO_lsu_C"/>
</dbReference>
<dbReference type="InterPro" id="IPR036376">
    <property type="entry name" value="RuBisCO_lsu_C_sf"/>
</dbReference>
<dbReference type="InterPro" id="IPR017443">
    <property type="entry name" value="RuBisCO_lsu_fd_N"/>
</dbReference>
<dbReference type="InterPro" id="IPR036422">
    <property type="entry name" value="RuBisCO_lsu_N_sf"/>
</dbReference>
<dbReference type="InterPro" id="IPR020888">
    <property type="entry name" value="RuBisCO_lsuI"/>
</dbReference>
<dbReference type="NCBIfam" id="NF003252">
    <property type="entry name" value="PRK04208.1"/>
    <property type="match status" value="1"/>
</dbReference>
<dbReference type="PANTHER" id="PTHR42704">
    <property type="entry name" value="RIBULOSE BISPHOSPHATE CARBOXYLASE"/>
    <property type="match status" value="1"/>
</dbReference>
<dbReference type="PANTHER" id="PTHR42704:SF16">
    <property type="entry name" value="RIBULOSE BISPHOSPHATE CARBOXYLASE LARGE CHAIN"/>
    <property type="match status" value="1"/>
</dbReference>
<dbReference type="Pfam" id="PF00016">
    <property type="entry name" value="RuBisCO_large"/>
    <property type="match status" value="1"/>
</dbReference>
<dbReference type="Pfam" id="PF02788">
    <property type="entry name" value="RuBisCO_large_N"/>
    <property type="match status" value="1"/>
</dbReference>
<dbReference type="SFLD" id="SFLDG01052">
    <property type="entry name" value="RuBisCO"/>
    <property type="match status" value="1"/>
</dbReference>
<dbReference type="SFLD" id="SFLDS00014">
    <property type="entry name" value="RuBisCO"/>
    <property type="match status" value="1"/>
</dbReference>
<dbReference type="SFLD" id="SFLDG00301">
    <property type="entry name" value="RuBisCO-like_proteins"/>
    <property type="match status" value="1"/>
</dbReference>
<dbReference type="SUPFAM" id="SSF51649">
    <property type="entry name" value="RuBisCo, C-terminal domain"/>
    <property type="match status" value="1"/>
</dbReference>
<dbReference type="SUPFAM" id="SSF54966">
    <property type="entry name" value="RuBisCO, large subunit, small (N-terminal) domain"/>
    <property type="match status" value="1"/>
</dbReference>
<dbReference type="PROSITE" id="PS00157">
    <property type="entry name" value="RUBISCO_LARGE"/>
    <property type="match status" value="1"/>
</dbReference>
<sequence>SVGFKAGVKDYKLTYYTPEYETKDTDILAAFRVTPQPGVPPEEAGAAVAAESSTGTWTTVWTDGLTSLDRYKGRCYHIEPVPGEESQFIAYVAYPLDLFEEGSVTNMFTSIVGNVFGFNAVRALRLEDLRIPPAYTKTFQGPPHGIQVERDKLNKYGRPLLGCTIKPKLGLSAKNYGRAVYECLRGGLDFTKDDENVNSQPFMRWRDRFLFCAEAIFKSQSETGEIKGHYLNATAGTCEEMIKRAVFARELGVPIVMHDYLTGGFTANTSLAHYCRDNGLLLHIHRAMHAVIDRQKNHGXHFRVLAKALRMSGGDHIHSGTVVGKLEGEREITLGFVDLLRDDFVEKDRSRGIFFTQDWVSLPGVLPVASGGIHVWHMPALTEIFGDDSVLQFGGGTLGXPWGNXPGAVANRVALEACVQARNEGRDLAREGNEIIREASKWSPELAAACEVWKEIKFEFEPVDTI</sequence>
<name>RBL_OXADI</name>